<reference key="1">
    <citation type="journal article" date="1990" name="Biol. Chem. Hoppe-Seyler">
        <title>Carnivora: the primary structure of hemoglobin from the Masked palm civet (Paguma larvata, Viverridae).</title>
        <authorList>
            <person name="He C."/>
            <person name="Braunitzer G."/>
            <person name="Goeltenboth R."/>
        </authorList>
    </citation>
    <scope>PROTEIN SEQUENCE</scope>
</reference>
<gene>
    <name type="primary">HBA</name>
</gene>
<dbReference type="PIR" id="S13280">
    <property type="entry name" value="S13280"/>
</dbReference>
<dbReference type="SMR" id="P19645"/>
<dbReference type="GO" id="GO:0072562">
    <property type="term" value="C:blood microparticle"/>
    <property type="evidence" value="ECO:0007669"/>
    <property type="project" value="TreeGrafter"/>
</dbReference>
<dbReference type="GO" id="GO:0031838">
    <property type="term" value="C:haptoglobin-hemoglobin complex"/>
    <property type="evidence" value="ECO:0007669"/>
    <property type="project" value="TreeGrafter"/>
</dbReference>
<dbReference type="GO" id="GO:0005833">
    <property type="term" value="C:hemoglobin complex"/>
    <property type="evidence" value="ECO:0007669"/>
    <property type="project" value="InterPro"/>
</dbReference>
<dbReference type="GO" id="GO:0031720">
    <property type="term" value="F:haptoglobin binding"/>
    <property type="evidence" value="ECO:0007669"/>
    <property type="project" value="TreeGrafter"/>
</dbReference>
<dbReference type="GO" id="GO:0020037">
    <property type="term" value="F:heme binding"/>
    <property type="evidence" value="ECO:0007669"/>
    <property type="project" value="InterPro"/>
</dbReference>
<dbReference type="GO" id="GO:0005506">
    <property type="term" value="F:iron ion binding"/>
    <property type="evidence" value="ECO:0007669"/>
    <property type="project" value="InterPro"/>
</dbReference>
<dbReference type="GO" id="GO:0043177">
    <property type="term" value="F:organic acid binding"/>
    <property type="evidence" value="ECO:0007669"/>
    <property type="project" value="TreeGrafter"/>
</dbReference>
<dbReference type="GO" id="GO:0019825">
    <property type="term" value="F:oxygen binding"/>
    <property type="evidence" value="ECO:0007669"/>
    <property type="project" value="InterPro"/>
</dbReference>
<dbReference type="GO" id="GO:0005344">
    <property type="term" value="F:oxygen carrier activity"/>
    <property type="evidence" value="ECO:0007669"/>
    <property type="project" value="UniProtKB-KW"/>
</dbReference>
<dbReference type="GO" id="GO:0004601">
    <property type="term" value="F:peroxidase activity"/>
    <property type="evidence" value="ECO:0007669"/>
    <property type="project" value="TreeGrafter"/>
</dbReference>
<dbReference type="GO" id="GO:0042744">
    <property type="term" value="P:hydrogen peroxide catabolic process"/>
    <property type="evidence" value="ECO:0007669"/>
    <property type="project" value="TreeGrafter"/>
</dbReference>
<dbReference type="CDD" id="cd08927">
    <property type="entry name" value="Hb-alpha-like"/>
    <property type="match status" value="1"/>
</dbReference>
<dbReference type="FunFam" id="1.10.490.10:FF:000002">
    <property type="entry name" value="Hemoglobin subunit alpha"/>
    <property type="match status" value="1"/>
</dbReference>
<dbReference type="Gene3D" id="1.10.490.10">
    <property type="entry name" value="Globins"/>
    <property type="match status" value="1"/>
</dbReference>
<dbReference type="InterPro" id="IPR000971">
    <property type="entry name" value="Globin"/>
</dbReference>
<dbReference type="InterPro" id="IPR009050">
    <property type="entry name" value="Globin-like_sf"/>
</dbReference>
<dbReference type="InterPro" id="IPR012292">
    <property type="entry name" value="Globin/Proto"/>
</dbReference>
<dbReference type="InterPro" id="IPR002338">
    <property type="entry name" value="Hemoglobin_a-typ"/>
</dbReference>
<dbReference type="InterPro" id="IPR050056">
    <property type="entry name" value="Hemoglobin_oxygen_transport"/>
</dbReference>
<dbReference type="InterPro" id="IPR002339">
    <property type="entry name" value="Hemoglobin_pi"/>
</dbReference>
<dbReference type="PANTHER" id="PTHR11442">
    <property type="entry name" value="HEMOGLOBIN FAMILY MEMBER"/>
    <property type="match status" value="1"/>
</dbReference>
<dbReference type="PANTHER" id="PTHR11442:SF48">
    <property type="entry name" value="HEMOGLOBIN SUBUNIT ALPHA"/>
    <property type="match status" value="1"/>
</dbReference>
<dbReference type="Pfam" id="PF00042">
    <property type="entry name" value="Globin"/>
    <property type="match status" value="1"/>
</dbReference>
<dbReference type="PRINTS" id="PR00612">
    <property type="entry name" value="ALPHAHAEM"/>
</dbReference>
<dbReference type="PRINTS" id="PR00815">
    <property type="entry name" value="PIHAEM"/>
</dbReference>
<dbReference type="SUPFAM" id="SSF46458">
    <property type="entry name" value="Globin-like"/>
    <property type="match status" value="1"/>
</dbReference>
<dbReference type="PROSITE" id="PS01033">
    <property type="entry name" value="GLOBIN"/>
    <property type="match status" value="1"/>
</dbReference>
<evidence type="ECO:0000250" key="1">
    <source>
        <dbReference type="UniProtKB" id="P01942"/>
    </source>
</evidence>
<evidence type="ECO:0000250" key="2">
    <source>
        <dbReference type="UniProtKB" id="P01946"/>
    </source>
</evidence>
<evidence type="ECO:0000250" key="3">
    <source>
        <dbReference type="UniProtKB" id="P69905"/>
    </source>
</evidence>
<evidence type="ECO:0000255" key="4">
    <source>
        <dbReference type="PROSITE-ProRule" id="PRU00238"/>
    </source>
</evidence>
<proteinExistence type="evidence at protein level"/>
<name>HBA_PAGLA</name>
<keyword id="KW-0007">Acetylation</keyword>
<keyword id="KW-0903">Direct protein sequencing</keyword>
<keyword id="KW-0349">Heme</keyword>
<keyword id="KW-0408">Iron</keyword>
<keyword id="KW-0479">Metal-binding</keyword>
<keyword id="KW-0561">Oxygen transport</keyword>
<keyword id="KW-0597">Phosphoprotein</keyword>
<keyword id="KW-0813">Transport</keyword>
<accession>P19645</accession>
<protein>
    <recommendedName>
        <fullName>Hemoglobin subunit alpha</fullName>
    </recommendedName>
    <alternativeName>
        <fullName>Alpha-globin</fullName>
    </alternativeName>
    <alternativeName>
        <fullName>Hemoglobin alpha chain</fullName>
    </alternativeName>
    <component>
        <recommendedName>
            <fullName evidence="2">Hemopressin</fullName>
        </recommendedName>
    </component>
</protein>
<sequence length="141" mass="15357">VLSSADKNNIKATWDKIGSHAGEYGAEALERTFISFPTTKTYFPHFDLSHGSAQVKAHGKKVADALTLAVGHLEDLPNALSALSDLHAYKLRVDPVNFKLLSHCLLVTLACHHPAEFTPAVHSALDKFFSAVSTVLTSKYR</sequence>
<organism>
    <name type="scientific">Paguma larvata</name>
    <name type="common">Masked palm civet</name>
    <dbReference type="NCBI Taxonomy" id="9675"/>
    <lineage>
        <taxon>Eukaryota</taxon>
        <taxon>Metazoa</taxon>
        <taxon>Chordata</taxon>
        <taxon>Craniata</taxon>
        <taxon>Vertebrata</taxon>
        <taxon>Euteleostomi</taxon>
        <taxon>Mammalia</taxon>
        <taxon>Eutheria</taxon>
        <taxon>Laurasiatheria</taxon>
        <taxon>Carnivora</taxon>
        <taxon>Feliformia</taxon>
        <taxon>Viverridae</taxon>
        <taxon>Paradoxurinae</taxon>
        <taxon>Paguma</taxon>
    </lineage>
</organism>
<comment type="function">
    <text>Involved in oxygen transport from the lung to the various peripheral tissues.</text>
</comment>
<comment type="function">
    <molecule>Hemopressin</molecule>
    <text evidence="2">Hemopressin acts as an antagonist peptide of the cannabinoid receptor CNR1. Hemopressin-binding efficiently blocks cannabinoid receptor CNR1 and subsequent signaling.</text>
</comment>
<comment type="subunit">
    <text>Heterotetramer of two alpha chains and two beta chains.</text>
</comment>
<comment type="tissue specificity">
    <text>Red blood cells.</text>
</comment>
<comment type="similarity">
    <text evidence="4">Belongs to the globin family.</text>
</comment>
<feature type="chain" id="PRO_0000052714" description="Hemoglobin subunit alpha">
    <location>
        <begin position="1"/>
        <end position="141"/>
    </location>
</feature>
<feature type="peptide" id="PRO_0000455913" description="Hemopressin" evidence="2">
    <location>
        <begin position="95"/>
        <end position="103"/>
    </location>
</feature>
<feature type="domain" description="Globin" evidence="4">
    <location>
        <begin position="1"/>
        <end position="141"/>
    </location>
</feature>
<feature type="binding site" evidence="4">
    <location>
        <position position="58"/>
    </location>
    <ligand>
        <name>O2</name>
        <dbReference type="ChEBI" id="CHEBI:15379"/>
    </ligand>
</feature>
<feature type="binding site" description="proximal binding residue" evidence="4">
    <location>
        <position position="87"/>
    </location>
    <ligand>
        <name>heme b</name>
        <dbReference type="ChEBI" id="CHEBI:60344"/>
    </ligand>
    <ligandPart>
        <name>Fe</name>
        <dbReference type="ChEBI" id="CHEBI:18248"/>
    </ligandPart>
</feature>
<feature type="modified residue" description="Phosphoserine" evidence="3">
    <location>
        <position position="3"/>
    </location>
</feature>
<feature type="modified residue" description="N6-succinyllysine" evidence="1">
    <location>
        <position position="7"/>
    </location>
</feature>
<feature type="modified residue" description="N6-succinyllysine" evidence="1">
    <location>
        <position position="11"/>
    </location>
</feature>
<feature type="modified residue" description="N6-acetyllysine; alternate" evidence="3">
    <location>
        <position position="16"/>
    </location>
</feature>
<feature type="modified residue" description="N6-succinyllysine; alternate" evidence="1">
    <location>
        <position position="16"/>
    </location>
</feature>
<feature type="modified residue" description="Phosphotyrosine" evidence="3">
    <location>
        <position position="24"/>
    </location>
</feature>
<feature type="modified residue" description="Phosphoserine" evidence="3">
    <location>
        <position position="35"/>
    </location>
</feature>
<feature type="modified residue" description="N6-succinyllysine" evidence="1">
    <location>
        <position position="40"/>
    </location>
</feature>
<feature type="modified residue" description="Phosphoserine" evidence="3">
    <location>
        <position position="49"/>
    </location>
</feature>
<feature type="modified residue" description="Phosphoserine" evidence="1">
    <location>
        <position position="102"/>
    </location>
</feature>
<feature type="modified residue" description="Phosphothreonine" evidence="1">
    <location>
        <position position="108"/>
    </location>
</feature>
<feature type="modified residue" description="Phosphothreonine" evidence="1">
    <location>
        <position position="134"/>
    </location>
</feature>
<feature type="modified residue" description="Phosphothreonine" evidence="1">
    <location>
        <position position="137"/>
    </location>
</feature>
<feature type="modified residue" description="Phosphoserine" evidence="1">
    <location>
        <position position="138"/>
    </location>
</feature>